<evidence type="ECO:0000250" key="1"/>
<evidence type="ECO:0000250" key="2">
    <source>
        <dbReference type="UniProtKB" id="P0AEE3"/>
    </source>
</evidence>
<evidence type="ECO:0000255" key="3"/>
<evidence type="ECO:0000255" key="4">
    <source>
        <dbReference type="PROSITE-ProRule" id="PRU00143"/>
    </source>
</evidence>
<evidence type="ECO:0000305" key="5"/>
<organism>
    <name type="scientific">Escherichia coli O157:H7</name>
    <dbReference type="NCBI Taxonomy" id="83334"/>
    <lineage>
        <taxon>Bacteria</taxon>
        <taxon>Pseudomonadati</taxon>
        <taxon>Pseudomonadota</taxon>
        <taxon>Gammaproteobacteria</taxon>
        <taxon>Enterobacterales</taxon>
        <taxon>Enterobacteriaceae</taxon>
        <taxon>Escherichia</taxon>
    </lineage>
</organism>
<accession>P0AEE4</accession>
<accession>P31137</accession>
<sequence length="355" mass="37581">MFVKLLRSVAIGLIVGAILLVAMPSLRSLNPLSTPQFDSTDETPASYNLAVRRAAPAVVNVYNRGLNTNSHNQLEIRTLGSGVIMDQRGYIITNKHVINDADQIIVALQDGRVFEALLVGSDSLTDLAVLKINATGGLPTIPINARRVPHIGDVVLAIGNPYNLGQTITQGIISATGRIGLNPTGRQNFLQTDASINHGNSGGALVNSLGELMGINTLSFDKSNDGETPEGIGFAIPFQLATKIMDKLIRDGRVIRGYIGIGGREIAPLHAQGGGIDQLQGIVVNEVSPDGPAANAGIQVNDLIISVDNKPAISALETMDQVAEIRPGSVIPVVVMRDDKQLTLQVTIQEYPATN</sequence>
<proteinExistence type="inferred from homology"/>
<keyword id="KW-0997">Cell inner membrane</keyword>
<keyword id="KW-1003">Cell membrane</keyword>
<keyword id="KW-0378">Hydrolase</keyword>
<keyword id="KW-0472">Membrane</keyword>
<keyword id="KW-0645">Protease</keyword>
<keyword id="KW-1185">Reference proteome</keyword>
<keyword id="KW-0720">Serine protease</keyword>
<keyword id="KW-0812">Transmembrane</keyword>
<keyword id="KW-1133">Transmembrane helix</keyword>
<comment type="function">
    <text evidence="1">A site-1 protease (S1P) that cleaves the peptide bond between 'Val-148' and 'Ser-149' in RseA. Part of a regulated intramembrane proteolysis (RIP) cascade. When heat shock or other environmental stresses disrupt protein folding in the periplasm, DegS senses the accumulation of unassembled outer membrane porins (OMP) and then initiates RseA (anti sigma-E factor) degradation by cleaving its periplasmic domain, making it a substrate for subsequent cleavage by RseP. This cascade ultimately leads to the sigma-E-driven expression of a variety of factors dealing with folding stress in the periplasm and OMP assembly. Required for basal and stress-induced degradation of RseA (By similarity).</text>
</comment>
<comment type="catalytic activity">
    <reaction>
        <text>Acts on substrates that are at least partially unfolded. The cleavage site P1 residue is normally between a pair of hydrophobic residues, such as Val-|-Val.</text>
        <dbReference type="EC" id="3.4.21.107"/>
    </reaction>
</comment>
<comment type="activity regulation">
    <text>Allosterically activated by the C-terminus of exposed OMP peptides (consensus Tyr-X-Phe-COOH); cleavage only occurs in the presence of peptides. Inhibited when RseB is bound to RseA.</text>
</comment>
<comment type="subunit">
    <text evidence="1">Homotrimer.</text>
</comment>
<comment type="subcellular location">
    <subcellularLocation>
        <location evidence="5">Cell inner membrane</location>
        <topology evidence="5">Single-pass membrane protein</topology>
    </subcellularLocation>
</comment>
<comment type="domain">
    <text evidence="1">The PDZ domain probably binds peptides ending with C-terminal Tyr-X-Phe sequences, which activates proteolysis. In the absence of OMP peptides the PDZ domain inhibits peptidase activity (By similarity).</text>
</comment>
<comment type="miscellaneous">
    <text evidence="1">Regulated intramembrane proteolysis (RIP) occurs when an extracytoplasmic signal triggers a concerted proteolytic cascade to transmit information and elicit cellular responses. A membrane-spanning regulatory substrate protein is first cut extracytoplasmically (site-1 protease, S1P, this enzyme), then within the membrane itself (site-2 protease, S2P), while cytoplasmic proteases finish degrading the regulatory protein, liberating the effector protein (By similarity).</text>
</comment>
<comment type="similarity">
    <text evidence="5">Belongs to the peptidase S1C family.</text>
</comment>
<reference key="1">
    <citation type="journal article" date="2001" name="Nature">
        <title>Genome sequence of enterohaemorrhagic Escherichia coli O157:H7.</title>
        <authorList>
            <person name="Perna N.T."/>
            <person name="Plunkett G. III"/>
            <person name="Burland V."/>
            <person name="Mau B."/>
            <person name="Glasner J.D."/>
            <person name="Rose D.J."/>
            <person name="Mayhew G.F."/>
            <person name="Evans P.S."/>
            <person name="Gregor J."/>
            <person name="Kirkpatrick H.A."/>
            <person name="Posfai G."/>
            <person name="Hackett J."/>
            <person name="Klink S."/>
            <person name="Boutin A."/>
            <person name="Shao Y."/>
            <person name="Miller L."/>
            <person name="Grotbeck E.J."/>
            <person name="Davis N.W."/>
            <person name="Lim A."/>
            <person name="Dimalanta E.T."/>
            <person name="Potamousis K."/>
            <person name="Apodaca J."/>
            <person name="Anantharaman T.S."/>
            <person name="Lin J."/>
            <person name="Yen G."/>
            <person name="Schwartz D.C."/>
            <person name="Welch R.A."/>
            <person name="Blattner F.R."/>
        </authorList>
    </citation>
    <scope>NUCLEOTIDE SEQUENCE [LARGE SCALE GENOMIC DNA]</scope>
    <source>
        <strain>O157:H7 / EDL933 / ATCC 700927 / EHEC</strain>
    </source>
</reference>
<reference key="2">
    <citation type="journal article" date="2001" name="DNA Res.">
        <title>Complete genome sequence of enterohemorrhagic Escherichia coli O157:H7 and genomic comparison with a laboratory strain K-12.</title>
        <authorList>
            <person name="Hayashi T."/>
            <person name="Makino K."/>
            <person name="Ohnishi M."/>
            <person name="Kurokawa K."/>
            <person name="Ishii K."/>
            <person name="Yokoyama K."/>
            <person name="Han C.-G."/>
            <person name="Ohtsubo E."/>
            <person name="Nakayama K."/>
            <person name="Murata T."/>
            <person name="Tanaka M."/>
            <person name="Tobe T."/>
            <person name="Iida T."/>
            <person name="Takami H."/>
            <person name="Honda T."/>
            <person name="Sasakawa C."/>
            <person name="Ogasawara N."/>
            <person name="Yasunaga T."/>
            <person name="Kuhara S."/>
            <person name="Shiba T."/>
            <person name="Hattori M."/>
            <person name="Shinagawa H."/>
        </authorList>
    </citation>
    <scope>NUCLEOTIDE SEQUENCE [LARGE SCALE GENOMIC DNA]</scope>
    <source>
        <strain>O157:H7 / Sakai / RIMD 0509952 / EHEC</strain>
    </source>
</reference>
<gene>
    <name type="primary">degS</name>
    <name type="ordered locus">Z4594</name>
    <name type="ordered locus">ECs4108</name>
</gene>
<dbReference type="EC" id="3.4.21.107"/>
<dbReference type="EMBL" id="AE005174">
    <property type="protein sequence ID" value="AAG58363.1"/>
    <property type="molecule type" value="Genomic_DNA"/>
</dbReference>
<dbReference type="EMBL" id="BA000007">
    <property type="protein sequence ID" value="BAB37531.1"/>
    <property type="molecule type" value="Genomic_DNA"/>
</dbReference>
<dbReference type="PIR" id="D91142">
    <property type="entry name" value="D91142"/>
</dbReference>
<dbReference type="RefSeq" id="NP_312135.1">
    <property type="nucleotide sequence ID" value="NC_002695.1"/>
</dbReference>
<dbReference type="RefSeq" id="WP_000497723.1">
    <property type="nucleotide sequence ID" value="NZ_VOAI01000014.1"/>
</dbReference>
<dbReference type="SMR" id="P0AEE4"/>
<dbReference type="STRING" id="155864.Z4594"/>
<dbReference type="MEROPS" id="S01.275"/>
<dbReference type="GeneID" id="916043"/>
<dbReference type="GeneID" id="93778751"/>
<dbReference type="KEGG" id="ece:Z4594"/>
<dbReference type="KEGG" id="ecs:ECs_4108"/>
<dbReference type="PATRIC" id="fig|386585.9.peg.4289"/>
<dbReference type="eggNOG" id="COG0265">
    <property type="taxonomic scope" value="Bacteria"/>
</dbReference>
<dbReference type="HOGENOM" id="CLU_020120_2_2_6"/>
<dbReference type="OMA" id="IMSPEGY"/>
<dbReference type="Proteomes" id="UP000000558">
    <property type="component" value="Chromosome"/>
</dbReference>
<dbReference type="Proteomes" id="UP000002519">
    <property type="component" value="Chromosome"/>
</dbReference>
<dbReference type="GO" id="GO:0042597">
    <property type="term" value="C:periplasmic space"/>
    <property type="evidence" value="ECO:0007669"/>
    <property type="project" value="TreeGrafter"/>
</dbReference>
<dbReference type="GO" id="GO:0005886">
    <property type="term" value="C:plasma membrane"/>
    <property type="evidence" value="ECO:0000250"/>
    <property type="project" value="UniProtKB"/>
</dbReference>
<dbReference type="GO" id="GO:0004252">
    <property type="term" value="F:serine-type endopeptidase activity"/>
    <property type="evidence" value="ECO:0000250"/>
    <property type="project" value="UniProtKB"/>
</dbReference>
<dbReference type="GO" id="GO:0071218">
    <property type="term" value="P:cellular response to misfolded protein"/>
    <property type="evidence" value="ECO:0000250"/>
    <property type="project" value="UniProtKB"/>
</dbReference>
<dbReference type="GO" id="GO:0006515">
    <property type="term" value="P:protein quality control for misfolded or incompletely synthesized proteins"/>
    <property type="evidence" value="ECO:0007669"/>
    <property type="project" value="TreeGrafter"/>
</dbReference>
<dbReference type="CDD" id="cd06777">
    <property type="entry name" value="cpPDZ_DegS"/>
    <property type="match status" value="1"/>
</dbReference>
<dbReference type="FunFam" id="2.30.42.10:FF:000077">
    <property type="entry name" value="Periplasmic serine peptidase DegS"/>
    <property type="match status" value="1"/>
</dbReference>
<dbReference type="FunFam" id="2.40.10.10:FF:000001">
    <property type="entry name" value="Periplasmic serine protease DegS"/>
    <property type="match status" value="1"/>
</dbReference>
<dbReference type="FunFam" id="2.40.10.10:FF:000009">
    <property type="entry name" value="Serine endoprotease DegS, periplasmic"/>
    <property type="match status" value="1"/>
</dbReference>
<dbReference type="Gene3D" id="2.30.42.10">
    <property type="match status" value="1"/>
</dbReference>
<dbReference type="Gene3D" id="2.40.10.10">
    <property type="entry name" value="Trypsin-like serine proteases"/>
    <property type="match status" value="2"/>
</dbReference>
<dbReference type="InterPro" id="IPR001478">
    <property type="entry name" value="PDZ"/>
</dbReference>
<dbReference type="InterPro" id="IPR036034">
    <property type="entry name" value="PDZ_sf"/>
</dbReference>
<dbReference type="InterPro" id="IPR011783">
    <property type="entry name" value="Pept_S1C_DegS"/>
</dbReference>
<dbReference type="InterPro" id="IPR009003">
    <property type="entry name" value="Peptidase_S1_PA"/>
</dbReference>
<dbReference type="InterPro" id="IPR043504">
    <property type="entry name" value="Peptidase_S1_PA_chymotrypsin"/>
</dbReference>
<dbReference type="InterPro" id="IPR001940">
    <property type="entry name" value="Peptidase_S1C"/>
</dbReference>
<dbReference type="NCBIfam" id="NF008147">
    <property type="entry name" value="PRK10898.1"/>
    <property type="match status" value="1"/>
</dbReference>
<dbReference type="NCBIfam" id="TIGR02038">
    <property type="entry name" value="protease_degS"/>
    <property type="match status" value="1"/>
</dbReference>
<dbReference type="PANTHER" id="PTHR22939:SF101">
    <property type="entry name" value="PERIPLASMIC PH-DEPENDENT SERINE ENDOPROTEASE DEGQ"/>
    <property type="match status" value="1"/>
</dbReference>
<dbReference type="PANTHER" id="PTHR22939">
    <property type="entry name" value="SERINE PROTEASE FAMILY S1C HTRA-RELATED"/>
    <property type="match status" value="1"/>
</dbReference>
<dbReference type="Pfam" id="PF13180">
    <property type="entry name" value="PDZ_2"/>
    <property type="match status" value="1"/>
</dbReference>
<dbReference type="Pfam" id="PF13365">
    <property type="entry name" value="Trypsin_2"/>
    <property type="match status" value="1"/>
</dbReference>
<dbReference type="PRINTS" id="PR00834">
    <property type="entry name" value="PROTEASES2C"/>
</dbReference>
<dbReference type="SMART" id="SM00228">
    <property type="entry name" value="PDZ"/>
    <property type="match status" value="1"/>
</dbReference>
<dbReference type="SUPFAM" id="SSF50156">
    <property type="entry name" value="PDZ domain-like"/>
    <property type="match status" value="1"/>
</dbReference>
<dbReference type="SUPFAM" id="SSF50494">
    <property type="entry name" value="Trypsin-like serine proteases"/>
    <property type="match status" value="1"/>
</dbReference>
<dbReference type="PROSITE" id="PS50106">
    <property type="entry name" value="PDZ"/>
    <property type="match status" value="1"/>
</dbReference>
<feature type="chain" id="PRO_0000043342" description="Serine endoprotease DegS">
    <location>
        <begin position="1"/>
        <end position="355"/>
    </location>
</feature>
<feature type="topological domain" description="Cytoplasmic" evidence="1">
    <location>
        <begin position="1"/>
        <end position="4"/>
    </location>
</feature>
<feature type="transmembrane region" description="Helical" evidence="3">
    <location>
        <begin position="5"/>
        <end position="27"/>
    </location>
</feature>
<feature type="topological domain" description="Periplasmic" evidence="1">
    <location>
        <begin position="28"/>
        <end position="355"/>
    </location>
</feature>
<feature type="domain" description="PDZ" evidence="4">
    <location>
        <begin position="281"/>
        <end position="326"/>
    </location>
</feature>
<feature type="active site" description="Charge relay system" evidence="2">
    <location>
        <position position="96"/>
    </location>
</feature>
<feature type="active site" description="Charge relay system" evidence="2">
    <location>
        <position position="126"/>
    </location>
</feature>
<feature type="active site" description="Charge relay system" evidence="2">
    <location>
        <position position="201"/>
    </location>
</feature>
<feature type="binding site" evidence="1">
    <location>
        <position position="184"/>
    </location>
    <ligand>
        <name>substrate</name>
    </ligand>
</feature>
<feature type="binding site" evidence="1">
    <location>
        <begin position="259"/>
        <end position="264"/>
    </location>
    <ligand>
        <name>substrate</name>
    </ligand>
</feature>
<feature type="binding site" evidence="1">
    <location>
        <position position="351"/>
    </location>
    <ligand>
        <name>substrate</name>
    </ligand>
</feature>
<name>DEGS_ECO57</name>
<protein>
    <recommendedName>
        <fullName>Serine endoprotease DegS</fullName>
        <ecNumber>3.4.21.107</ecNumber>
    </recommendedName>
    <alternativeName>
        <fullName>Site-1 protease DegS</fullName>
        <shortName>S1P protease DegS</shortName>
    </alternativeName>
    <alternativeName>
        <fullName>Site-1-type intramembrane protease</fullName>
    </alternativeName>
</protein>